<keyword id="KW-0066">ATP synthesis</keyword>
<keyword id="KW-1003">Cell membrane</keyword>
<keyword id="KW-0139">CF(1)</keyword>
<keyword id="KW-0375">Hydrogen ion transport</keyword>
<keyword id="KW-0406">Ion transport</keyword>
<keyword id="KW-0472">Membrane</keyword>
<keyword id="KW-0813">Transport</keyword>
<feature type="chain" id="PRO_0000188112" description="ATP synthase epsilon chain">
    <location>
        <begin position="1"/>
        <end position="138"/>
    </location>
</feature>
<proteinExistence type="inferred from homology"/>
<sequence length="138" mass="15629">MDFYLDIVSVEKRIFSGLVDRIQVSGSEGEMGIYPGHTQLLSIIKPGVIYIFHKNKTEECLYISGGILEVQPSVVSILADVAIRGIDLDRKRVVKAKKQAEEYFKKETTNVKKDDVLLEISKAIAKLRVLEIMDKFKK</sequence>
<reference key="1">
    <citation type="journal article" date="1997" name="Curr. Microbiol.">
        <title>The (F1F0) ATP synthase of Buchnera aphidicola (endosymbiont of aphids): genetic analysis of the putative ATP operon.</title>
        <authorList>
            <person name="Clark M.A."/>
            <person name="Baumann P."/>
        </authorList>
    </citation>
    <scope>NUCLEOTIDE SEQUENCE [GENOMIC DNA]</scope>
</reference>
<reference key="2">
    <citation type="journal article" date="1998" name="Curr. Microbiol.">
        <title>Sequence analysis of a 34.7-kb DNA segment from the genome of Buchnera aphidicola (endosymbiont of aphids) containing groEL, dnaA, the atp operon, gidA, and rho.</title>
        <authorList>
            <person name="Clark M.A."/>
            <person name="Baumann L."/>
            <person name="Baumann P."/>
        </authorList>
    </citation>
    <scope>NUCLEOTIDE SEQUENCE [GENOMIC DNA]</scope>
</reference>
<reference key="3">
    <citation type="journal article" date="2002" name="Science">
        <title>50 million years of genomic stasis in endosymbiotic bacteria.</title>
        <authorList>
            <person name="Tamas I."/>
            <person name="Klasson L."/>
            <person name="Canbaeck B."/>
            <person name="Naeslund A.K."/>
            <person name="Eriksson A.-S."/>
            <person name="Wernegreen J.J."/>
            <person name="Sandstroem J.P."/>
            <person name="Moran N.A."/>
            <person name="Andersson S.G.E."/>
        </authorList>
    </citation>
    <scope>NUCLEOTIDE SEQUENCE [LARGE SCALE GENOMIC DNA]</scope>
    <source>
        <strain>Sg</strain>
    </source>
</reference>
<comment type="function">
    <text evidence="1">Produces ATP from ADP in the presence of a proton gradient across the membrane.</text>
</comment>
<comment type="subunit">
    <text>F-type ATPases have 2 components, CF(1) - the catalytic core - and CF(0) - the membrane proton channel. CF(1) has five subunits: alpha(3), beta(3), gamma(1), delta(1), epsilon(1). CF(0) has three main subunits: a, b and c.</text>
</comment>
<comment type="subcellular location">
    <subcellularLocation>
        <location evidence="1">Cell membrane</location>
        <topology evidence="1">Peripheral membrane protein</topology>
    </subcellularLocation>
</comment>
<comment type="similarity">
    <text evidence="2">Belongs to the ATPase epsilon chain family.</text>
</comment>
<evidence type="ECO:0000250" key="1"/>
<evidence type="ECO:0000305" key="2"/>
<protein>
    <recommendedName>
        <fullName>ATP synthase epsilon chain</fullName>
    </recommendedName>
    <alternativeName>
        <fullName>ATP synthase F1 sector epsilon subunit</fullName>
    </alternativeName>
    <alternativeName>
        <fullName>F-ATPase epsilon subunit</fullName>
    </alternativeName>
</protein>
<organism>
    <name type="scientific">Buchnera aphidicola subsp. Schizaphis graminum (strain Sg)</name>
    <dbReference type="NCBI Taxonomy" id="198804"/>
    <lineage>
        <taxon>Bacteria</taxon>
        <taxon>Pseudomonadati</taxon>
        <taxon>Pseudomonadota</taxon>
        <taxon>Gammaproteobacteria</taxon>
        <taxon>Enterobacterales</taxon>
        <taxon>Erwiniaceae</taxon>
        <taxon>Buchnera</taxon>
    </lineage>
</organism>
<accession>O51871</accession>
<name>ATPE_BUCAP</name>
<dbReference type="EMBL" id="AF008210">
    <property type="protein sequence ID" value="AAC38109.1"/>
    <property type="molecule type" value="Genomic_DNA"/>
</dbReference>
<dbReference type="EMBL" id="AE013218">
    <property type="protein sequence ID" value="AAM67581.1"/>
    <property type="molecule type" value="Genomic_DNA"/>
</dbReference>
<dbReference type="SMR" id="O51871"/>
<dbReference type="STRING" id="198804.BUsg_009"/>
<dbReference type="KEGG" id="bas:BUsg_009"/>
<dbReference type="eggNOG" id="COG0355">
    <property type="taxonomic scope" value="Bacteria"/>
</dbReference>
<dbReference type="HOGENOM" id="CLU_084338_2_0_6"/>
<dbReference type="Proteomes" id="UP000000416">
    <property type="component" value="Chromosome"/>
</dbReference>
<dbReference type="GO" id="GO:0005886">
    <property type="term" value="C:plasma membrane"/>
    <property type="evidence" value="ECO:0007669"/>
    <property type="project" value="UniProtKB-SubCell"/>
</dbReference>
<dbReference type="GO" id="GO:0045259">
    <property type="term" value="C:proton-transporting ATP synthase complex"/>
    <property type="evidence" value="ECO:0007669"/>
    <property type="project" value="UniProtKB-KW"/>
</dbReference>
<dbReference type="GO" id="GO:0005524">
    <property type="term" value="F:ATP binding"/>
    <property type="evidence" value="ECO:0007669"/>
    <property type="project" value="UniProtKB-UniRule"/>
</dbReference>
<dbReference type="GO" id="GO:0046933">
    <property type="term" value="F:proton-transporting ATP synthase activity, rotational mechanism"/>
    <property type="evidence" value="ECO:0007669"/>
    <property type="project" value="UniProtKB-UniRule"/>
</dbReference>
<dbReference type="CDD" id="cd12152">
    <property type="entry name" value="F1-ATPase_delta"/>
    <property type="match status" value="1"/>
</dbReference>
<dbReference type="FunFam" id="2.60.15.10:FF:000001">
    <property type="entry name" value="ATP synthase epsilon chain"/>
    <property type="match status" value="1"/>
</dbReference>
<dbReference type="Gene3D" id="1.20.5.440">
    <property type="entry name" value="ATP synthase delta/epsilon subunit, C-terminal domain"/>
    <property type="match status" value="1"/>
</dbReference>
<dbReference type="Gene3D" id="2.60.15.10">
    <property type="entry name" value="F0F1 ATP synthase delta/epsilon subunit, N-terminal"/>
    <property type="match status" value="1"/>
</dbReference>
<dbReference type="HAMAP" id="MF_00530">
    <property type="entry name" value="ATP_synth_epsil_bac"/>
    <property type="match status" value="1"/>
</dbReference>
<dbReference type="InterPro" id="IPR036794">
    <property type="entry name" value="ATP_F1_dsu/esu_C_sf"/>
</dbReference>
<dbReference type="InterPro" id="IPR001469">
    <property type="entry name" value="ATP_synth_F1_dsu/esu"/>
</dbReference>
<dbReference type="InterPro" id="IPR020546">
    <property type="entry name" value="ATP_synth_F1_dsu/esu_N"/>
</dbReference>
<dbReference type="InterPro" id="IPR036771">
    <property type="entry name" value="ATPsynth_dsu/esu_N"/>
</dbReference>
<dbReference type="NCBIfam" id="TIGR01216">
    <property type="entry name" value="ATP_synt_epsi"/>
    <property type="match status" value="1"/>
</dbReference>
<dbReference type="NCBIfam" id="NF001847">
    <property type="entry name" value="PRK00571.1-4"/>
    <property type="match status" value="1"/>
</dbReference>
<dbReference type="PANTHER" id="PTHR13822">
    <property type="entry name" value="ATP SYNTHASE DELTA/EPSILON CHAIN"/>
    <property type="match status" value="1"/>
</dbReference>
<dbReference type="PANTHER" id="PTHR13822:SF10">
    <property type="entry name" value="ATP SYNTHASE EPSILON CHAIN, CHLOROPLASTIC"/>
    <property type="match status" value="1"/>
</dbReference>
<dbReference type="Pfam" id="PF02823">
    <property type="entry name" value="ATP-synt_DE_N"/>
    <property type="match status" value="1"/>
</dbReference>
<dbReference type="SUPFAM" id="SSF46604">
    <property type="entry name" value="Epsilon subunit of F1F0-ATP synthase C-terminal domain"/>
    <property type="match status" value="1"/>
</dbReference>
<dbReference type="SUPFAM" id="SSF51344">
    <property type="entry name" value="Epsilon subunit of F1F0-ATP synthase N-terminal domain"/>
    <property type="match status" value="1"/>
</dbReference>
<gene>
    <name type="primary">atpC</name>
    <name type="ordered locus">BUsg_009</name>
</gene>